<protein>
    <recommendedName>
        <fullName evidence="1">Bifunctional protein HldE</fullName>
    </recommendedName>
    <domain>
        <recommendedName>
            <fullName evidence="1">D-beta-D-heptose 7-phosphate kinase</fullName>
            <ecNumber evidence="1">2.7.1.167</ecNumber>
        </recommendedName>
        <alternativeName>
            <fullName evidence="1">D-beta-D-heptose 7-phosphotransferase</fullName>
        </alternativeName>
        <alternativeName>
            <fullName evidence="1">D-glycero-beta-D-manno-heptose-7-phosphate kinase</fullName>
        </alternativeName>
    </domain>
    <domain>
        <recommendedName>
            <fullName evidence="1">D-beta-D-heptose 1-phosphate adenylyltransferase</fullName>
            <ecNumber evidence="1">2.7.7.70</ecNumber>
        </recommendedName>
        <alternativeName>
            <fullName evidence="1">D-glycero-beta-D-manno-heptose 1-phosphate adenylyltransferase</fullName>
        </alternativeName>
    </domain>
</protein>
<proteinExistence type="inferred from homology"/>
<feature type="chain" id="PRO_0000080106" description="Bifunctional protein HldE">
    <location>
        <begin position="1"/>
        <end position="475"/>
    </location>
</feature>
<feature type="region of interest" description="Ribokinase">
    <location>
        <begin position="1"/>
        <end position="321"/>
    </location>
</feature>
<feature type="region of interest" description="Cytidylyltransferase">
    <location>
        <begin position="346"/>
        <end position="475"/>
    </location>
</feature>
<feature type="active site" evidence="1">
    <location>
        <position position="266"/>
    </location>
</feature>
<feature type="binding site" evidence="1">
    <location>
        <begin position="197"/>
        <end position="200"/>
    </location>
    <ligand>
        <name>ATP</name>
        <dbReference type="ChEBI" id="CHEBI:30616"/>
    </ligand>
</feature>
<organism>
    <name type="scientific">Coxiella burnetii (strain RSA 493 / Nine Mile phase I)</name>
    <dbReference type="NCBI Taxonomy" id="227377"/>
    <lineage>
        <taxon>Bacteria</taxon>
        <taxon>Pseudomonadati</taxon>
        <taxon>Pseudomonadota</taxon>
        <taxon>Gammaproteobacteria</taxon>
        <taxon>Legionellales</taxon>
        <taxon>Coxiellaceae</taxon>
        <taxon>Coxiella</taxon>
    </lineage>
</organism>
<evidence type="ECO:0000255" key="1">
    <source>
        <dbReference type="HAMAP-Rule" id="MF_01603"/>
    </source>
</evidence>
<evidence type="ECO:0000305" key="2"/>
<gene>
    <name evidence="1" type="primary">hldE</name>
    <name type="synonym">rfaE</name>
    <name type="ordered locus">CBU_1655</name>
</gene>
<name>HLDE_COXBU</name>
<accession>Q83B60</accession>
<comment type="function">
    <text evidence="1">Catalyzes the phosphorylation of D-glycero-D-manno-heptose 7-phosphate at the C-1 position to selectively form D-glycero-beta-D-manno-heptose-1,7-bisphosphate.</text>
</comment>
<comment type="function">
    <text evidence="1">Catalyzes the ADP transfer from ATP to D-glycero-beta-D-manno-heptose 1-phosphate, yielding ADP-D-glycero-beta-D-manno-heptose.</text>
</comment>
<comment type="catalytic activity">
    <reaction evidence="1">
        <text>D-glycero-beta-D-manno-heptose 7-phosphate + ATP = D-glycero-beta-D-manno-heptose 1,7-bisphosphate + ADP + H(+)</text>
        <dbReference type="Rhea" id="RHEA:27473"/>
        <dbReference type="ChEBI" id="CHEBI:15378"/>
        <dbReference type="ChEBI" id="CHEBI:30616"/>
        <dbReference type="ChEBI" id="CHEBI:60204"/>
        <dbReference type="ChEBI" id="CHEBI:60208"/>
        <dbReference type="ChEBI" id="CHEBI:456216"/>
        <dbReference type="EC" id="2.7.1.167"/>
    </reaction>
</comment>
<comment type="catalytic activity">
    <reaction evidence="1">
        <text>D-glycero-beta-D-manno-heptose 1-phosphate + ATP + H(+) = ADP-D-glycero-beta-D-manno-heptose + diphosphate</text>
        <dbReference type="Rhea" id="RHEA:27465"/>
        <dbReference type="ChEBI" id="CHEBI:15378"/>
        <dbReference type="ChEBI" id="CHEBI:30616"/>
        <dbReference type="ChEBI" id="CHEBI:33019"/>
        <dbReference type="ChEBI" id="CHEBI:59967"/>
        <dbReference type="ChEBI" id="CHEBI:61593"/>
        <dbReference type="EC" id="2.7.7.70"/>
    </reaction>
</comment>
<comment type="pathway">
    <text evidence="1">Nucleotide-sugar biosynthesis; ADP-L-glycero-beta-D-manno-heptose biosynthesis; ADP-L-glycero-beta-D-manno-heptose from D-glycero-beta-D-manno-heptose 7-phosphate: step 1/4.</text>
</comment>
<comment type="pathway">
    <text evidence="1">Nucleotide-sugar biosynthesis; ADP-L-glycero-beta-D-manno-heptose biosynthesis; ADP-L-glycero-beta-D-manno-heptose from D-glycero-beta-D-manno-heptose 7-phosphate: step 3/4.</text>
</comment>
<comment type="subunit">
    <text evidence="1">Homodimer.</text>
</comment>
<comment type="similarity">
    <text evidence="1">In the N-terminal section; belongs to the carbohydrate kinase PfkB family.</text>
</comment>
<comment type="similarity">
    <text evidence="1">In the C-terminal section; belongs to the cytidylyltransferase family.</text>
</comment>
<comment type="sequence caution" evidence="2">
    <conflict type="erroneous initiation">
        <sequence resource="EMBL-CDS" id="AAO91151"/>
    </conflict>
</comment>
<dbReference type="EC" id="2.7.1.167" evidence="1"/>
<dbReference type="EC" id="2.7.7.70" evidence="1"/>
<dbReference type="EMBL" id="AE016828">
    <property type="protein sequence ID" value="AAO91151.2"/>
    <property type="status" value="ALT_INIT"/>
    <property type="molecule type" value="Genomic_DNA"/>
</dbReference>
<dbReference type="RefSeq" id="NP_820637.2">
    <property type="nucleotide sequence ID" value="NC_002971.3"/>
</dbReference>
<dbReference type="SMR" id="Q83B60"/>
<dbReference type="STRING" id="227377.CBU_1655"/>
<dbReference type="EnsemblBacteria" id="AAO91151">
    <property type="protein sequence ID" value="AAO91151"/>
    <property type="gene ID" value="CBU_1655"/>
</dbReference>
<dbReference type="GeneID" id="1209566"/>
<dbReference type="KEGG" id="cbu:CBU_1655"/>
<dbReference type="PATRIC" id="fig|227377.7.peg.1646"/>
<dbReference type="eggNOG" id="COG0615">
    <property type="taxonomic scope" value="Bacteria"/>
</dbReference>
<dbReference type="eggNOG" id="COG2870">
    <property type="taxonomic scope" value="Bacteria"/>
</dbReference>
<dbReference type="HOGENOM" id="CLU_021150_2_1_6"/>
<dbReference type="OrthoDB" id="9802794at2"/>
<dbReference type="UniPathway" id="UPA00356">
    <property type="reaction ID" value="UER00437"/>
</dbReference>
<dbReference type="UniPathway" id="UPA00356">
    <property type="reaction ID" value="UER00439"/>
</dbReference>
<dbReference type="Proteomes" id="UP000002671">
    <property type="component" value="Chromosome"/>
</dbReference>
<dbReference type="GO" id="GO:0005829">
    <property type="term" value="C:cytosol"/>
    <property type="evidence" value="ECO:0000318"/>
    <property type="project" value="GO_Central"/>
</dbReference>
<dbReference type="GO" id="GO:0005524">
    <property type="term" value="F:ATP binding"/>
    <property type="evidence" value="ECO:0007669"/>
    <property type="project" value="UniProtKB-UniRule"/>
</dbReference>
<dbReference type="GO" id="GO:0033785">
    <property type="term" value="F:heptose 7-phosphate kinase activity"/>
    <property type="evidence" value="ECO:0000318"/>
    <property type="project" value="GO_Central"/>
</dbReference>
<dbReference type="GO" id="GO:0033786">
    <property type="term" value="F:heptose-1-phosphate adenylyltransferase activity"/>
    <property type="evidence" value="ECO:0000318"/>
    <property type="project" value="GO_Central"/>
</dbReference>
<dbReference type="GO" id="GO:0016773">
    <property type="term" value="F:phosphotransferase activity, alcohol group as acceptor"/>
    <property type="evidence" value="ECO:0007669"/>
    <property type="project" value="InterPro"/>
</dbReference>
<dbReference type="GO" id="GO:0097171">
    <property type="term" value="P:ADP-L-glycero-beta-D-manno-heptose biosynthetic process"/>
    <property type="evidence" value="ECO:0007669"/>
    <property type="project" value="UniProtKB-UniPathway"/>
</dbReference>
<dbReference type="CDD" id="cd01172">
    <property type="entry name" value="RfaE_like"/>
    <property type="match status" value="1"/>
</dbReference>
<dbReference type="FunFam" id="3.40.1190.20:FF:000002">
    <property type="entry name" value="Bifunctional protein HldE"/>
    <property type="match status" value="1"/>
</dbReference>
<dbReference type="FunFam" id="3.40.50.620:FF:000028">
    <property type="entry name" value="Bifunctional protein HldE"/>
    <property type="match status" value="1"/>
</dbReference>
<dbReference type="Gene3D" id="3.40.1190.20">
    <property type="match status" value="1"/>
</dbReference>
<dbReference type="Gene3D" id="3.40.50.620">
    <property type="entry name" value="HUPs"/>
    <property type="match status" value="1"/>
</dbReference>
<dbReference type="HAMAP" id="MF_01603">
    <property type="entry name" value="HldE"/>
    <property type="match status" value="1"/>
</dbReference>
<dbReference type="InterPro" id="IPR023030">
    <property type="entry name" value="Bifunc_HldE"/>
</dbReference>
<dbReference type="InterPro" id="IPR002173">
    <property type="entry name" value="Carboh/pur_kinase_PfkB_CS"/>
</dbReference>
<dbReference type="InterPro" id="IPR004821">
    <property type="entry name" value="Cyt_trans-like"/>
</dbReference>
<dbReference type="InterPro" id="IPR011611">
    <property type="entry name" value="PfkB_dom"/>
</dbReference>
<dbReference type="InterPro" id="IPR011913">
    <property type="entry name" value="RfaE_dom_I"/>
</dbReference>
<dbReference type="InterPro" id="IPR011914">
    <property type="entry name" value="RfaE_dom_II"/>
</dbReference>
<dbReference type="InterPro" id="IPR029056">
    <property type="entry name" value="Ribokinase-like"/>
</dbReference>
<dbReference type="InterPro" id="IPR014729">
    <property type="entry name" value="Rossmann-like_a/b/a_fold"/>
</dbReference>
<dbReference type="NCBIfam" id="TIGR00125">
    <property type="entry name" value="cyt_tran_rel"/>
    <property type="match status" value="1"/>
</dbReference>
<dbReference type="NCBIfam" id="NF008454">
    <property type="entry name" value="PRK11316.1"/>
    <property type="match status" value="1"/>
</dbReference>
<dbReference type="NCBIfam" id="TIGR02198">
    <property type="entry name" value="rfaE_dom_I"/>
    <property type="match status" value="1"/>
</dbReference>
<dbReference type="NCBIfam" id="TIGR02199">
    <property type="entry name" value="rfaE_dom_II"/>
    <property type="match status" value="1"/>
</dbReference>
<dbReference type="PANTHER" id="PTHR46969">
    <property type="entry name" value="BIFUNCTIONAL PROTEIN HLDE"/>
    <property type="match status" value="1"/>
</dbReference>
<dbReference type="PANTHER" id="PTHR46969:SF1">
    <property type="entry name" value="BIFUNCTIONAL PROTEIN HLDE"/>
    <property type="match status" value="1"/>
</dbReference>
<dbReference type="Pfam" id="PF01467">
    <property type="entry name" value="CTP_transf_like"/>
    <property type="match status" value="1"/>
</dbReference>
<dbReference type="Pfam" id="PF00294">
    <property type="entry name" value="PfkB"/>
    <property type="match status" value="1"/>
</dbReference>
<dbReference type="SUPFAM" id="SSF52374">
    <property type="entry name" value="Nucleotidylyl transferase"/>
    <property type="match status" value="1"/>
</dbReference>
<dbReference type="SUPFAM" id="SSF53613">
    <property type="entry name" value="Ribokinase-like"/>
    <property type="match status" value="1"/>
</dbReference>
<dbReference type="PROSITE" id="PS00583">
    <property type="entry name" value="PFKB_KINASES_1"/>
    <property type="match status" value="1"/>
</dbReference>
<reference key="1">
    <citation type="journal article" date="2003" name="Proc. Natl. Acad. Sci. U.S.A.">
        <title>Complete genome sequence of the Q-fever pathogen, Coxiella burnetii.</title>
        <authorList>
            <person name="Seshadri R."/>
            <person name="Paulsen I.T."/>
            <person name="Eisen J.A."/>
            <person name="Read T.D."/>
            <person name="Nelson K.E."/>
            <person name="Nelson W.C."/>
            <person name="Ward N.L."/>
            <person name="Tettelin H."/>
            <person name="Davidsen T.M."/>
            <person name="Beanan M.J."/>
            <person name="DeBoy R.T."/>
            <person name="Daugherty S.C."/>
            <person name="Brinkac L.M."/>
            <person name="Madupu R."/>
            <person name="Dodson R.J."/>
            <person name="Khouri H.M."/>
            <person name="Lee K.H."/>
            <person name="Carty H.A."/>
            <person name="Scanlan D."/>
            <person name="Heinzen R.A."/>
            <person name="Thompson H.A."/>
            <person name="Samuel J.E."/>
            <person name="Fraser C.M."/>
            <person name="Heidelberg J.F."/>
        </authorList>
    </citation>
    <scope>NUCLEOTIDE SEQUENCE [LARGE SCALE GENOMIC DNA]</scope>
    <source>
        <strain>RSA 493 / Nine Mile phase I</strain>
    </source>
</reference>
<keyword id="KW-0067">ATP-binding</keyword>
<keyword id="KW-0119">Carbohydrate metabolism</keyword>
<keyword id="KW-0418">Kinase</keyword>
<keyword id="KW-0511">Multifunctional enzyme</keyword>
<keyword id="KW-0547">Nucleotide-binding</keyword>
<keyword id="KW-0548">Nucleotidyltransferase</keyword>
<keyword id="KW-1185">Reference proteome</keyword>
<keyword id="KW-0808">Transferase</keyword>
<sequence>MADKIDISLYEKARIVVYGDIMLDRYWYGQASRISPEAPIPVVNVDQIEARPGGAANVALNVAALGASVELMGVVGDDQESRELETLLNKKSINCHFHRLNDHPTVTKLRVLGQNQQLLRLDFEKTLKHYEDKGLLQRYQHSLSHAQAVILSDYAKGALFNVTAPIQRAREKGLPVLVDPKSVDFSRYAGATLLTPNLKEFEAVVGHCRTDQELEFKARALIHQYRFEAILITRGKQGMMLIQKEGAAINLVAHAREVYDVTGAGDTVIAVMAASLAAGGDFYEAAQLANLAAGLVVRKLGAATVTVPELRRALHQITASHHGILSEKALLLAVADARAHGETIVMTNGCFDILHAGHVHYLEAAKAMGHRLIVAVNDDNSVRRLKGKDRPINSLQARMEVLTALRAIDWVVPFSEDTPARLITEVLPNILVKGGDYQPSQIAGGDEVVKNGGKVLTIPIKEGFSTSRLVEKMLN</sequence>